<keyword id="KW-1185">Reference proteome</keyword>
<keyword id="KW-0964">Secreted</keyword>
<feature type="chain" id="PRO_0000167801" description="ESAT-6-like protein EsxJ">
    <location>
        <begin position="1"/>
        <end position="98"/>
    </location>
</feature>
<sequence length="98" mass="10993">MASRFMTDPHAMRDMAGRFEVHAQTVEDEARRMWASAQNISGAGWSGMAEATSLDTMTQMNQAFRNIVNMLHGVRDGLVRDANNYEQQEQASQQILSS</sequence>
<comment type="subcellular location">
    <subcellularLocation>
        <location evidence="1">Secreted</location>
    </subcellularLocation>
    <text evidence="1">Probably secreted via the ESX-5 / type VII secretion system (T7SS).</text>
</comment>
<comment type="similarity">
    <text evidence="2">Belongs to the WXG100 family. CFP-10 subfamily.</text>
</comment>
<evidence type="ECO:0000250" key="1">
    <source>
        <dbReference type="UniProtKB" id="P9WNJ9"/>
    </source>
</evidence>
<evidence type="ECO:0000305" key="2"/>
<dbReference type="EMBL" id="LT708304">
    <property type="protein sequence ID" value="SIT99666.1"/>
    <property type="molecule type" value="Genomic_DNA"/>
</dbReference>
<dbReference type="RefSeq" id="NP_854723.1">
    <property type="nucleotide sequence ID" value="NC_002945.3"/>
</dbReference>
<dbReference type="RefSeq" id="NP_854883.1">
    <property type="nucleotide sequence ID" value="NC_002945.3"/>
</dbReference>
<dbReference type="RefSeq" id="WP_003405345.1">
    <property type="nucleotide sequence ID" value="NC_002945.4"/>
</dbReference>
<dbReference type="SMR" id="P0DOB0"/>
<dbReference type="GeneID" id="45425009"/>
<dbReference type="KEGG" id="mbo:BQ2027_MB1067C"/>
<dbReference type="Proteomes" id="UP000001419">
    <property type="component" value="Chromosome"/>
</dbReference>
<dbReference type="GO" id="GO:0005576">
    <property type="term" value="C:extracellular region"/>
    <property type="evidence" value="ECO:0007669"/>
    <property type="project" value="UniProtKB-SubCell"/>
</dbReference>
<dbReference type="FunFam" id="1.10.287.1060:FF:000006">
    <property type="entry name" value="ESAT-6-like protein"/>
    <property type="match status" value="1"/>
</dbReference>
<dbReference type="Gene3D" id="1.10.287.1060">
    <property type="entry name" value="ESAT-6-like"/>
    <property type="match status" value="1"/>
</dbReference>
<dbReference type="InterPro" id="IPR036689">
    <property type="entry name" value="ESAT-6-like_sf"/>
</dbReference>
<dbReference type="InterPro" id="IPR010310">
    <property type="entry name" value="T7SS_ESAT-6-like"/>
</dbReference>
<dbReference type="NCBIfam" id="TIGR03930">
    <property type="entry name" value="WXG100_ESAT6"/>
    <property type="match status" value="1"/>
</dbReference>
<dbReference type="Pfam" id="PF06013">
    <property type="entry name" value="WXG100"/>
    <property type="match status" value="1"/>
</dbReference>
<dbReference type="SUPFAM" id="SSF140453">
    <property type="entry name" value="EsxAB dimer-like"/>
    <property type="match status" value="1"/>
</dbReference>
<proteinExistence type="inferred from homology"/>
<reference key="1">
    <citation type="journal article" date="2003" name="Proc. Natl. Acad. Sci. U.S.A.">
        <title>The complete genome sequence of Mycobacterium bovis.</title>
        <authorList>
            <person name="Garnier T."/>
            <person name="Eiglmeier K."/>
            <person name="Camus J.-C."/>
            <person name="Medina N."/>
            <person name="Mansoor H."/>
            <person name="Pryor M."/>
            <person name="Duthoy S."/>
            <person name="Grondin S."/>
            <person name="Lacroix C."/>
            <person name="Monsempe C."/>
            <person name="Simon S."/>
            <person name="Harris B."/>
            <person name="Atkin R."/>
            <person name="Doggett J."/>
            <person name="Mayes R."/>
            <person name="Keating L."/>
            <person name="Wheeler P.R."/>
            <person name="Parkhill J."/>
            <person name="Barrell B.G."/>
            <person name="Cole S.T."/>
            <person name="Gordon S.V."/>
            <person name="Hewinson R.G."/>
        </authorList>
    </citation>
    <scope>NUCLEOTIDE SEQUENCE [LARGE SCALE GENOMIC DNA]</scope>
    <source>
        <strain>ATCC BAA-935 / AF2122/97</strain>
    </source>
</reference>
<reference key="2">
    <citation type="journal article" date="2017" name="Genome Announc.">
        <title>Updated reference genome sequence and annotation of Mycobacterium bovis AF2122/97.</title>
        <authorList>
            <person name="Malone K.M."/>
            <person name="Farrell D."/>
            <person name="Stuber T.P."/>
            <person name="Schubert O.T."/>
            <person name="Aebersold R."/>
            <person name="Robbe-Austerman S."/>
            <person name="Gordon S.V."/>
        </authorList>
    </citation>
    <scope>NUCLEOTIDE SEQUENCE [LARGE SCALE GENOMIC DNA]</scope>
    <scope>GENOME REANNOTATION</scope>
    <source>
        <strain>ATCC BAA-935 / AF2122/97</strain>
    </source>
</reference>
<name>ESXJ_MYCBO</name>
<protein>
    <recommendedName>
        <fullName evidence="1">ESAT-6-like protein EsxJ</fullName>
    </recommendedName>
</protein>
<accession>P0DOB0</accession>
<accession>A0A1R3XXM2</accession>
<accession>P59803</accession>
<accession>X2BGJ8</accession>
<gene>
    <name evidence="1" type="primary">esxJ</name>
    <name type="ordered locus">BQ2027_MB1067C</name>
</gene>
<organism>
    <name type="scientific">Mycobacterium bovis (strain ATCC BAA-935 / AF2122/97)</name>
    <dbReference type="NCBI Taxonomy" id="233413"/>
    <lineage>
        <taxon>Bacteria</taxon>
        <taxon>Bacillati</taxon>
        <taxon>Actinomycetota</taxon>
        <taxon>Actinomycetes</taxon>
        <taxon>Mycobacteriales</taxon>
        <taxon>Mycobacteriaceae</taxon>
        <taxon>Mycobacterium</taxon>
        <taxon>Mycobacterium tuberculosis complex</taxon>
    </lineage>
</organism>